<protein>
    <recommendedName>
        <fullName evidence="1">Histidine--tRNA ligase</fullName>
        <ecNumber evidence="1">6.1.1.21</ecNumber>
    </recommendedName>
    <alternativeName>
        <fullName evidence="1">Histidyl-tRNA synthetase</fullName>
        <shortName evidence="1">HisRS</shortName>
    </alternativeName>
</protein>
<comment type="catalytic activity">
    <reaction evidence="1">
        <text>tRNA(His) + L-histidine + ATP = L-histidyl-tRNA(His) + AMP + diphosphate + H(+)</text>
        <dbReference type="Rhea" id="RHEA:17313"/>
        <dbReference type="Rhea" id="RHEA-COMP:9665"/>
        <dbReference type="Rhea" id="RHEA-COMP:9689"/>
        <dbReference type="ChEBI" id="CHEBI:15378"/>
        <dbReference type="ChEBI" id="CHEBI:30616"/>
        <dbReference type="ChEBI" id="CHEBI:33019"/>
        <dbReference type="ChEBI" id="CHEBI:57595"/>
        <dbReference type="ChEBI" id="CHEBI:78442"/>
        <dbReference type="ChEBI" id="CHEBI:78527"/>
        <dbReference type="ChEBI" id="CHEBI:456215"/>
        <dbReference type="EC" id="6.1.1.21"/>
    </reaction>
</comment>
<comment type="subunit">
    <text evidence="1">Homodimer.</text>
</comment>
<comment type="subcellular location">
    <subcellularLocation>
        <location evidence="1">Cytoplasm</location>
    </subcellularLocation>
</comment>
<comment type="similarity">
    <text evidence="1">Belongs to the class-II aminoacyl-tRNA synthetase family.</text>
</comment>
<keyword id="KW-0030">Aminoacyl-tRNA synthetase</keyword>
<keyword id="KW-0067">ATP-binding</keyword>
<keyword id="KW-0963">Cytoplasm</keyword>
<keyword id="KW-0436">Ligase</keyword>
<keyword id="KW-0547">Nucleotide-binding</keyword>
<keyword id="KW-0648">Protein biosynthesis</keyword>
<feature type="chain" id="PRO_1000016309" description="Histidine--tRNA ligase">
    <location>
        <begin position="1"/>
        <end position="420"/>
    </location>
</feature>
<accession>Q2GLK4</accession>
<organism>
    <name type="scientific">Anaplasma phagocytophilum (strain HZ)</name>
    <dbReference type="NCBI Taxonomy" id="212042"/>
    <lineage>
        <taxon>Bacteria</taxon>
        <taxon>Pseudomonadati</taxon>
        <taxon>Pseudomonadota</taxon>
        <taxon>Alphaproteobacteria</taxon>
        <taxon>Rickettsiales</taxon>
        <taxon>Anaplasmataceae</taxon>
        <taxon>Anaplasma</taxon>
        <taxon>phagocytophilum group</taxon>
    </lineage>
</organism>
<sequence length="420" mass="47159">MKVGGFQPVRGTKDLLSEEYYKLFHIQNVAQEIGERFGFMPVQTPIFEFQEVFCKTLGDSTDVIGKEMYTFADRGGDVLALRPEFTAAIVRLLLSEKMQPPARLFTAGPVFRYERPQKCRQRQFHQINYECFGAGGSQADAEIISLAYCVLEVFGLHCDVTLEINSLGSSECMNAYRASLLSFFEKYRSELSEDSRRRLQTNPLRILDSKDATDKEILSTAPSIEDFYDAETRASFEGLKDHLTNLGIPYAVNRRLVRGLDYYTGTVFEYKTSSLGAQDAIIAGGRYDNLVAAMGGENVPAIGFAGGVERLAALMSYSRTRKFCVFILPISEEVVSHAMRITYEIRRTLSGVQVICDIVTRLKTGIKRADRQKADIALILGDEEVNRNAVSCKNMLTGKQEEISISNITEYLKAMMAERQ</sequence>
<proteinExistence type="inferred from homology"/>
<evidence type="ECO:0000255" key="1">
    <source>
        <dbReference type="HAMAP-Rule" id="MF_00127"/>
    </source>
</evidence>
<dbReference type="EC" id="6.1.1.21" evidence="1"/>
<dbReference type="EMBL" id="CP000235">
    <property type="protein sequence ID" value="ABD44457.1"/>
    <property type="molecule type" value="Genomic_DNA"/>
</dbReference>
<dbReference type="RefSeq" id="WP_011450273.1">
    <property type="nucleotide sequence ID" value="NC_007797.1"/>
</dbReference>
<dbReference type="SMR" id="Q2GLK4"/>
<dbReference type="STRING" id="212042.APH_0120"/>
<dbReference type="PaxDb" id="212042-APH_0120"/>
<dbReference type="EnsemblBacteria" id="ABD44457">
    <property type="protein sequence ID" value="ABD44457"/>
    <property type="gene ID" value="APH_0120"/>
</dbReference>
<dbReference type="GeneID" id="92747639"/>
<dbReference type="KEGG" id="aph:APH_0120"/>
<dbReference type="eggNOG" id="COG0124">
    <property type="taxonomic scope" value="Bacteria"/>
</dbReference>
<dbReference type="HOGENOM" id="CLU_025113_1_0_5"/>
<dbReference type="Proteomes" id="UP000001943">
    <property type="component" value="Chromosome"/>
</dbReference>
<dbReference type="GO" id="GO:0005737">
    <property type="term" value="C:cytoplasm"/>
    <property type="evidence" value="ECO:0007669"/>
    <property type="project" value="UniProtKB-SubCell"/>
</dbReference>
<dbReference type="GO" id="GO:0005524">
    <property type="term" value="F:ATP binding"/>
    <property type="evidence" value="ECO:0007669"/>
    <property type="project" value="UniProtKB-UniRule"/>
</dbReference>
<dbReference type="GO" id="GO:0004821">
    <property type="term" value="F:histidine-tRNA ligase activity"/>
    <property type="evidence" value="ECO:0007669"/>
    <property type="project" value="UniProtKB-UniRule"/>
</dbReference>
<dbReference type="GO" id="GO:0006427">
    <property type="term" value="P:histidyl-tRNA aminoacylation"/>
    <property type="evidence" value="ECO:0007669"/>
    <property type="project" value="UniProtKB-UniRule"/>
</dbReference>
<dbReference type="CDD" id="cd00773">
    <property type="entry name" value="HisRS-like_core"/>
    <property type="match status" value="1"/>
</dbReference>
<dbReference type="Gene3D" id="3.40.50.800">
    <property type="entry name" value="Anticodon-binding domain"/>
    <property type="match status" value="1"/>
</dbReference>
<dbReference type="Gene3D" id="3.30.930.10">
    <property type="entry name" value="Bira Bifunctional Protein, Domain 2"/>
    <property type="match status" value="1"/>
</dbReference>
<dbReference type="HAMAP" id="MF_00127">
    <property type="entry name" value="His_tRNA_synth"/>
    <property type="match status" value="1"/>
</dbReference>
<dbReference type="InterPro" id="IPR006195">
    <property type="entry name" value="aa-tRNA-synth_II"/>
</dbReference>
<dbReference type="InterPro" id="IPR045864">
    <property type="entry name" value="aa-tRNA-synth_II/BPL/LPL"/>
</dbReference>
<dbReference type="InterPro" id="IPR004154">
    <property type="entry name" value="Anticodon-bd"/>
</dbReference>
<dbReference type="InterPro" id="IPR036621">
    <property type="entry name" value="Anticodon-bd_dom_sf"/>
</dbReference>
<dbReference type="InterPro" id="IPR015807">
    <property type="entry name" value="His-tRNA-ligase"/>
</dbReference>
<dbReference type="InterPro" id="IPR041715">
    <property type="entry name" value="HisRS-like_core"/>
</dbReference>
<dbReference type="InterPro" id="IPR004516">
    <property type="entry name" value="HisRS/HisZ"/>
</dbReference>
<dbReference type="NCBIfam" id="TIGR00442">
    <property type="entry name" value="hisS"/>
    <property type="match status" value="1"/>
</dbReference>
<dbReference type="PANTHER" id="PTHR43707:SF1">
    <property type="entry name" value="HISTIDINE--TRNA LIGASE, MITOCHONDRIAL-RELATED"/>
    <property type="match status" value="1"/>
</dbReference>
<dbReference type="PANTHER" id="PTHR43707">
    <property type="entry name" value="HISTIDYL-TRNA SYNTHETASE"/>
    <property type="match status" value="1"/>
</dbReference>
<dbReference type="Pfam" id="PF03129">
    <property type="entry name" value="HGTP_anticodon"/>
    <property type="match status" value="1"/>
</dbReference>
<dbReference type="Pfam" id="PF13393">
    <property type="entry name" value="tRNA-synt_His"/>
    <property type="match status" value="1"/>
</dbReference>
<dbReference type="PIRSF" id="PIRSF001549">
    <property type="entry name" value="His-tRNA_synth"/>
    <property type="match status" value="1"/>
</dbReference>
<dbReference type="SUPFAM" id="SSF52954">
    <property type="entry name" value="Class II aaRS ABD-related"/>
    <property type="match status" value="1"/>
</dbReference>
<dbReference type="SUPFAM" id="SSF55681">
    <property type="entry name" value="Class II aaRS and biotin synthetases"/>
    <property type="match status" value="1"/>
</dbReference>
<dbReference type="PROSITE" id="PS50862">
    <property type="entry name" value="AA_TRNA_LIGASE_II"/>
    <property type="match status" value="1"/>
</dbReference>
<gene>
    <name evidence="1" type="primary">hisS</name>
    <name type="ordered locus">APH_0120</name>
</gene>
<reference key="1">
    <citation type="journal article" date="2006" name="PLoS Genet.">
        <title>Comparative genomics of emerging human ehrlichiosis agents.</title>
        <authorList>
            <person name="Dunning Hotopp J.C."/>
            <person name="Lin M."/>
            <person name="Madupu R."/>
            <person name="Crabtree J."/>
            <person name="Angiuoli S.V."/>
            <person name="Eisen J.A."/>
            <person name="Seshadri R."/>
            <person name="Ren Q."/>
            <person name="Wu M."/>
            <person name="Utterback T.R."/>
            <person name="Smith S."/>
            <person name="Lewis M."/>
            <person name="Khouri H."/>
            <person name="Zhang C."/>
            <person name="Niu H."/>
            <person name="Lin Q."/>
            <person name="Ohashi N."/>
            <person name="Zhi N."/>
            <person name="Nelson W.C."/>
            <person name="Brinkac L.M."/>
            <person name="Dodson R.J."/>
            <person name="Rosovitz M.J."/>
            <person name="Sundaram J.P."/>
            <person name="Daugherty S.C."/>
            <person name="Davidsen T."/>
            <person name="Durkin A.S."/>
            <person name="Gwinn M.L."/>
            <person name="Haft D.H."/>
            <person name="Selengut J.D."/>
            <person name="Sullivan S.A."/>
            <person name="Zafar N."/>
            <person name="Zhou L."/>
            <person name="Benahmed F."/>
            <person name="Forberger H."/>
            <person name="Halpin R."/>
            <person name="Mulligan S."/>
            <person name="Robinson J."/>
            <person name="White O."/>
            <person name="Rikihisa Y."/>
            <person name="Tettelin H."/>
        </authorList>
    </citation>
    <scope>NUCLEOTIDE SEQUENCE [LARGE SCALE GENOMIC DNA]</scope>
    <source>
        <strain>HZ</strain>
    </source>
</reference>
<name>SYH_ANAPZ</name>